<feature type="chain" id="PRO_1000052662" description="Large ribosomal subunit protein uL22">
    <location>
        <begin position="1"/>
        <end position="114"/>
    </location>
</feature>
<comment type="function">
    <text evidence="1">This protein binds specifically to 23S rRNA; its binding is stimulated by other ribosomal proteins, e.g. L4, L17, and L20. It is important during the early stages of 50S assembly. It makes multiple contacts with different domains of the 23S rRNA in the assembled 50S subunit and ribosome (By similarity).</text>
</comment>
<comment type="function">
    <text evidence="1">The globular domain of the protein is located near the polypeptide exit tunnel on the outside of the subunit, while an extended beta-hairpin is found that lines the wall of the exit tunnel in the center of the 70S ribosome.</text>
</comment>
<comment type="subunit">
    <text evidence="1">Part of the 50S ribosomal subunit.</text>
</comment>
<comment type="similarity">
    <text evidence="1">Belongs to the universal ribosomal protein uL22 family.</text>
</comment>
<evidence type="ECO:0000255" key="1">
    <source>
        <dbReference type="HAMAP-Rule" id="MF_01331"/>
    </source>
</evidence>
<evidence type="ECO:0000305" key="2"/>
<dbReference type="EMBL" id="CP000259">
    <property type="protein sequence ID" value="ABF31237.1"/>
    <property type="molecule type" value="Genomic_DNA"/>
</dbReference>
<dbReference type="RefSeq" id="WP_002986651.1">
    <property type="nucleotide sequence ID" value="NC_008021.1"/>
</dbReference>
<dbReference type="SMR" id="Q1JP12"/>
<dbReference type="GeneID" id="83703909"/>
<dbReference type="KEGG" id="spk:MGAS9429_Spy0049"/>
<dbReference type="HOGENOM" id="CLU_083987_3_3_9"/>
<dbReference type="Proteomes" id="UP000002433">
    <property type="component" value="Chromosome"/>
</dbReference>
<dbReference type="GO" id="GO:0022625">
    <property type="term" value="C:cytosolic large ribosomal subunit"/>
    <property type="evidence" value="ECO:0007669"/>
    <property type="project" value="TreeGrafter"/>
</dbReference>
<dbReference type="GO" id="GO:0019843">
    <property type="term" value="F:rRNA binding"/>
    <property type="evidence" value="ECO:0007669"/>
    <property type="project" value="UniProtKB-UniRule"/>
</dbReference>
<dbReference type="GO" id="GO:0003735">
    <property type="term" value="F:structural constituent of ribosome"/>
    <property type="evidence" value="ECO:0007669"/>
    <property type="project" value="InterPro"/>
</dbReference>
<dbReference type="GO" id="GO:0006412">
    <property type="term" value="P:translation"/>
    <property type="evidence" value="ECO:0007669"/>
    <property type="project" value="UniProtKB-UniRule"/>
</dbReference>
<dbReference type="CDD" id="cd00336">
    <property type="entry name" value="Ribosomal_L22"/>
    <property type="match status" value="1"/>
</dbReference>
<dbReference type="FunFam" id="3.90.470.10:FF:000001">
    <property type="entry name" value="50S ribosomal protein L22"/>
    <property type="match status" value="1"/>
</dbReference>
<dbReference type="Gene3D" id="3.90.470.10">
    <property type="entry name" value="Ribosomal protein L22/L17"/>
    <property type="match status" value="1"/>
</dbReference>
<dbReference type="HAMAP" id="MF_01331_B">
    <property type="entry name" value="Ribosomal_uL22_B"/>
    <property type="match status" value="1"/>
</dbReference>
<dbReference type="InterPro" id="IPR001063">
    <property type="entry name" value="Ribosomal_uL22"/>
</dbReference>
<dbReference type="InterPro" id="IPR005727">
    <property type="entry name" value="Ribosomal_uL22_bac/chlpt-type"/>
</dbReference>
<dbReference type="InterPro" id="IPR047867">
    <property type="entry name" value="Ribosomal_uL22_bac/org-type"/>
</dbReference>
<dbReference type="InterPro" id="IPR018260">
    <property type="entry name" value="Ribosomal_uL22_CS"/>
</dbReference>
<dbReference type="InterPro" id="IPR036394">
    <property type="entry name" value="Ribosomal_uL22_sf"/>
</dbReference>
<dbReference type="NCBIfam" id="TIGR01044">
    <property type="entry name" value="rplV_bact"/>
    <property type="match status" value="1"/>
</dbReference>
<dbReference type="PANTHER" id="PTHR13501">
    <property type="entry name" value="CHLOROPLAST 50S RIBOSOMAL PROTEIN L22-RELATED"/>
    <property type="match status" value="1"/>
</dbReference>
<dbReference type="PANTHER" id="PTHR13501:SF8">
    <property type="entry name" value="LARGE RIBOSOMAL SUBUNIT PROTEIN UL22M"/>
    <property type="match status" value="1"/>
</dbReference>
<dbReference type="Pfam" id="PF00237">
    <property type="entry name" value="Ribosomal_L22"/>
    <property type="match status" value="1"/>
</dbReference>
<dbReference type="SUPFAM" id="SSF54843">
    <property type="entry name" value="Ribosomal protein L22"/>
    <property type="match status" value="1"/>
</dbReference>
<dbReference type="PROSITE" id="PS00464">
    <property type="entry name" value="RIBOSOMAL_L22"/>
    <property type="match status" value="1"/>
</dbReference>
<name>RL22_STRPC</name>
<keyword id="KW-0687">Ribonucleoprotein</keyword>
<keyword id="KW-0689">Ribosomal protein</keyword>
<keyword id="KW-0694">RNA-binding</keyword>
<keyword id="KW-0699">rRNA-binding</keyword>
<organism>
    <name type="scientific">Streptococcus pyogenes serotype M12 (strain MGAS9429)</name>
    <dbReference type="NCBI Taxonomy" id="370551"/>
    <lineage>
        <taxon>Bacteria</taxon>
        <taxon>Bacillati</taxon>
        <taxon>Bacillota</taxon>
        <taxon>Bacilli</taxon>
        <taxon>Lactobacillales</taxon>
        <taxon>Streptococcaceae</taxon>
        <taxon>Streptococcus</taxon>
    </lineage>
</organism>
<proteinExistence type="inferred from homology"/>
<protein>
    <recommendedName>
        <fullName evidence="1">Large ribosomal subunit protein uL22</fullName>
    </recommendedName>
    <alternativeName>
        <fullName evidence="2">50S ribosomal protein L22</fullName>
    </alternativeName>
</protein>
<reference key="1">
    <citation type="journal article" date="2006" name="Proc. Natl. Acad. Sci. U.S.A.">
        <title>Molecular genetic anatomy of inter- and intraserotype variation in the human bacterial pathogen group A Streptococcus.</title>
        <authorList>
            <person name="Beres S.B."/>
            <person name="Richter E.W."/>
            <person name="Nagiec M.J."/>
            <person name="Sumby P."/>
            <person name="Porcella S.F."/>
            <person name="DeLeo F.R."/>
            <person name="Musser J.M."/>
        </authorList>
    </citation>
    <scope>NUCLEOTIDE SEQUENCE [LARGE SCALE GENOMIC DNA]</scope>
    <source>
        <strain>MGAS9429</strain>
    </source>
</reference>
<accession>Q1JP12</accession>
<sequence length="114" mass="12431">MAEITSAKAMARTVRVSPRKTRLVLDLIRGKKVADAIAILKFTPNKAARVIEKTLNSAIANAENNFGLEKANLVVSETFANEGPTMKRFRPRAKGSASPINKRTTHVTVVVSEK</sequence>
<gene>
    <name evidence="1" type="primary">rplV</name>
    <name type="ordered locus">MGAS9429_Spy0049</name>
</gene>